<reference key="1">
    <citation type="journal article" date="2003" name="Nat. Genet.">
        <title>Comparative analysis of the genome sequences of Bordetella pertussis, Bordetella parapertussis and Bordetella bronchiseptica.</title>
        <authorList>
            <person name="Parkhill J."/>
            <person name="Sebaihia M."/>
            <person name="Preston A."/>
            <person name="Murphy L.D."/>
            <person name="Thomson N.R."/>
            <person name="Harris D.E."/>
            <person name="Holden M.T.G."/>
            <person name="Churcher C.M."/>
            <person name="Bentley S.D."/>
            <person name="Mungall K.L."/>
            <person name="Cerdeno-Tarraga A.-M."/>
            <person name="Temple L."/>
            <person name="James K.D."/>
            <person name="Harris B."/>
            <person name="Quail M.A."/>
            <person name="Achtman M."/>
            <person name="Atkin R."/>
            <person name="Baker S."/>
            <person name="Basham D."/>
            <person name="Bason N."/>
            <person name="Cherevach I."/>
            <person name="Chillingworth T."/>
            <person name="Collins M."/>
            <person name="Cronin A."/>
            <person name="Davis P."/>
            <person name="Doggett J."/>
            <person name="Feltwell T."/>
            <person name="Goble A."/>
            <person name="Hamlin N."/>
            <person name="Hauser H."/>
            <person name="Holroyd S."/>
            <person name="Jagels K."/>
            <person name="Leather S."/>
            <person name="Moule S."/>
            <person name="Norberczak H."/>
            <person name="O'Neil S."/>
            <person name="Ormond D."/>
            <person name="Price C."/>
            <person name="Rabbinowitsch E."/>
            <person name="Rutter S."/>
            <person name="Sanders M."/>
            <person name="Saunders D."/>
            <person name="Seeger K."/>
            <person name="Sharp S."/>
            <person name="Simmonds M."/>
            <person name="Skelton J."/>
            <person name="Squares R."/>
            <person name="Squares S."/>
            <person name="Stevens K."/>
            <person name="Unwin L."/>
            <person name="Whitehead S."/>
            <person name="Barrell B.G."/>
            <person name="Maskell D.J."/>
        </authorList>
    </citation>
    <scope>NUCLEOTIDE SEQUENCE [LARGE SCALE GENOMIC DNA]</scope>
    <source>
        <strain>12822 / ATCC BAA-587 / NCTC 13253</strain>
    </source>
</reference>
<gene>
    <name evidence="1" type="primary">rplR</name>
    <name type="ordered locus">BPP0047</name>
</gene>
<proteinExistence type="inferred from homology"/>
<name>RL18_BORPA</name>
<dbReference type="EMBL" id="BX640423">
    <property type="protein sequence ID" value="CAE39788.1"/>
    <property type="molecule type" value="Genomic_DNA"/>
</dbReference>
<dbReference type="RefSeq" id="WP_003806922.1">
    <property type="nucleotide sequence ID" value="NC_002928.3"/>
</dbReference>
<dbReference type="SMR" id="Q7W2D9"/>
<dbReference type="GeneID" id="93206277"/>
<dbReference type="KEGG" id="bpa:BPP0047"/>
<dbReference type="HOGENOM" id="CLU_098841_0_1_4"/>
<dbReference type="Proteomes" id="UP000001421">
    <property type="component" value="Chromosome"/>
</dbReference>
<dbReference type="GO" id="GO:0022625">
    <property type="term" value="C:cytosolic large ribosomal subunit"/>
    <property type="evidence" value="ECO:0007669"/>
    <property type="project" value="TreeGrafter"/>
</dbReference>
<dbReference type="GO" id="GO:0008097">
    <property type="term" value="F:5S rRNA binding"/>
    <property type="evidence" value="ECO:0007669"/>
    <property type="project" value="TreeGrafter"/>
</dbReference>
<dbReference type="GO" id="GO:0003735">
    <property type="term" value="F:structural constituent of ribosome"/>
    <property type="evidence" value="ECO:0007669"/>
    <property type="project" value="InterPro"/>
</dbReference>
<dbReference type="GO" id="GO:0006412">
    <property type="term" value="P:translation"/>
    <property type="evidence" value="ECO:0007669"/>
    <property type="project" value="UniProtKB-UniRule"/>
</dbReference>
<dbReference type="CDD" id="cd00432">
    <property type="entry name" value="Ribosomal_L18_L5e"/>
    <property type="match status" value="1"/>
</dbReference>
<dbReference type="FunFam" id="3.30.420.100:FF:000001">
    <property type="entry name" value="50S ribosomal protein L18"/>
    <property type="match status" value="1"/>
</dbReference>
<dbReference type="Gene3D" id="3.30.420.100">
    <property type="match status" value="1"/>
</dbReference>
<dbReference type="HAMAP" id="MF_01337_B">
    <property type="entry name" value="Ribosomal_uL18_B"/>
    <property type="match status" value="1"/>
</dbReference>
<dbReference type="InterPro" id="IPR004389">
    <property type="entry name" value="Ribosomal_uL18_bac-type"/>
</dbReference>
<dbReference type="InterPro" id="IPR005484">
    <property type="entry name" value="Ribosomal_uL18_bac/euk"/>
</dbReference>
<dbReference type="NCBIfam" id="TIGR00060">
    <property type="entry name" value="L18_bact"/>
    <property type="match status" value="1"/>
</dbReference>
<dbReference type="PANTHER" id="PTHR12899">
    <property type="entry name" value="39S RIBOSOMAL PROTEIN L18, MITOCHONDRIAL"/>
    <property type="match status" value="1"/>
</dbReference>
<dbReference type="PANTHER" id="PTHR12899:SF3">
    <property type="entry name" value="LARGE RIBOSOMAL SUBUNIT PROTEIN UL18M"/>
    <property type="match status" value="1"/>
</dbReference>
<dbReference type="Pfam" id="PF00861">
    <property type="entry name" value="Ribosomal_L18p"/>
    <property type="match status" value="1"/>
</dbReference>
<dbReference type="SUPFAM" id="SSF53137">
    <property type="entry name" value="Translational machinery components"/>
    <property type="match status" value="1"/>
</dbReference>
<organism>
    <name type="scientific">Bordetella parapertussis (strain 12822 / ATCC BAA-587 / NCTC 13253)</name>
    <dbReference type="NCBI Taxonomy" id="257311"/>
    <lineage>
        <taxon>Bacteria</taxon>
        <taxon>Pseudomonadati</taxon>
        <taxon>Pseudomonadota</taxon>
        <taxon>Betaproteobacteria</taxon>
        <taxon>Burkholderiales</taxon>
        <taxon>Alcaligenaceae</taxon>
        <taxon>Bordetella</taxon>
    </lineage>
</organism>
<comment type="function">
    <text evidence="1">This is one of the proteins that bind and probably mediate the attachment of the 5S RNA into the large ribosomal subunit, where it forms part of the central protuberance.</text>
</comment>
<comment type="subunit">
    <text evidence="1">Part of the 50S ribosomal subunit; part of the 5S rRNA/L5/L18/L25 subcomplex. Contacts the 5S and 23S rRNAs.</text>
</comment>
<comment type="similarity">
    <text evidence="1">Belongs to the universal ribosomal protein uL18 family.</text>
</comment>
<feature type="chain" id="PRO_0000131225" description="Large ribosomal subunit protein uL18">
    <location>
        <begin position="1"/>
        <end position="120"/>
    </location>
</feature>
<accession>Q7W2D9</accession>
<evidence type="ECO:0000255" key="1">
    <source>
        <dbReference type="HAMAP-Rule" id="MF_01337"/>
    </source>
</evidence>
<evidence type="ECO:0000305" key="2"/>
<sequence>MDKKVSRLRRAVPTRRKIAQLRVHRLSVFRSNLHIYANIISPEGDRVLVSASTLEAEVRAQLGGAGKGGNATAAALVGKRVAEKAKAAGIELVAFDRSGFRYHGRVKALAEAAREAGLKF</sequence>
<protein>
    <recommendedName>
        <fullName evidence="1">Large ribosomal subunit protein uL18</fullName>
    </recommendedName>
    <alternativeName>
        <fullName evidence="2">50S ribosomal protein L18</fullName>
    </alternativeName>
</protein>
<keyword id="KW-0687">Ribonucleoprotein</keyword>
<keyword id="KW-0689">Ribosomal protein</keyword>
<keyword id="KW-0694">RNA-binding</keyword>
<keyword id="KW-0699">rRNA-binding</keyword>